<organism>
    <name type="scientific">Mycobacterium tuberculosis (strain ATCC 25618 / H37Rv)</name>
    <dbReference type="NCBI Taxonomy" id="83332"/>
    <lineage>
        <taxon>Bacteria</taxon>
        <taxon>Bacillati</taxon>
        <taxon>Actinomycetota</taxon>
        <taxon>Actinomycetes</taxon>
        <taxon>Mycobacteriales</taxon>
        <taxon>Mycobacteriaceae</taxon>
        <taxon>Mycobacterium</taxon>
        <taxon>Mycobacterium tuberculosis complex</taxon>
    </lineage>
</organism>
<sequence length="171" mass="17640">MATIGEVEVFVDHGADDVFITYPLWIGTRQADRLRQLADRARIAVGAGTAEGASNTGARLADAAGAIDVLIEIDSGHHRSGVRAEQVLEVAHAVGEAGLHLVGVFTFPGHSYAPGKPGEAGEQERRALNDAANALVAVGFPISCRSGGSTPTALLTAADGASETSRRLCAR</sequence>
<gene>
    <name type="ordered locus">Rv1413</name>
    <name type="ORF">MTCY21B4.30</name>
</gene>
<accession>P9WLY5</accession>
<accession>L0T6S9</accession>
<accession>P64843</accession>
<accession>P71681</accession>
<protein>
    <recommendedName>
        <fullName>Uncharacterized protein Rv1413</fullName>
    </recommendedName>
</protein>
<dbReference type="EMBL" id="AL123456">
    <property type="protein sequence ID" value="CCP44172.1"/>
    <property type="molecule type" value="Genomic_DNA"/>
</dbReference>
<dbReference type="PIR" id="B70902">
    <property type="entry name" value="B70902"/>
</dbReference>
<dbReference type="RefSeq" id="NP_215929.1">
    <property type="nucleotide sequence ID" value="NC_000962.3"/>
</dbReference>
<dbReference type="RefSeq" id="WP_003900337.1">
    <property type="nucleotide sequence ID" value="NC_000962.3"/>
</dbReference>
<dbReference type="SMR" id="P9WLY5"/>
<dbReference type="STRING" id="83332.Rv1413"/>
<dbReference type="PaxDb" id="83332-Rv1413"/>
<dbReference type="DNASU" id="886692"/>
<dbReference type="GeneID" id="886692"/>
<dbReference type="KEGG" id="mtu:Rv1413"/>
<dbReference type="KEGG" id="mtv:RVBD_1413"/>
<dbReference type="TubercuList" id="Rv1413"/>
<dbReference type="eggNOG" id="COG3616">
    <property type="taxonomic scope" value="Bacteria"/>
</dbReference>
<dbReference type="InParanoid" id="P9WLY5"/>
<dbReference type="OrthoDB" id="9811417at2"/>
<dbReference type="PhylomeDB" id="P9WLY5"/>
<dbReference type="Proteomes" id="UP000001584">
    <property type="component" value="Chromosome"/>
</dbReference>
<dbReference type="Gene3D" id="3.20.20.10">
    <property type="entry name" value="Alanine racemase"/>
    <property type="match status" value="1"/>
</dbReference>
<dbReference type="InterPro" id="IPR001608">
    <property type="entry name" value="Ala_racemase_N"/>
</dbReference>
<dbReference type="InterPro" id="IPR051466">
    <property type="entry name" value="D-amino_acid_metab_enzyme"/>
</dbReference>
<dbReference type="InterPro" id="IPR029066">
    <property type="entry name" value="PLP-binding_barrel"/>
</dbReference>
<dbReference type="PANTHER" id="PTHR28004:SF2">
    <property type="entry name" value="D-SERINE DEHYDRATASE"/>
    <property type="match status" value="1"/>
</dbReference>
<dbReference type="PANTHER" id="PTHR28004">
    <property type="entry name" value="ZGC:162816-RELATED"/>
    <property type="match status" value="1"/>
</dbReference>
<dbReference type="Pfam" id="PF01168">
    <property type="entry name" value="Ala_racemase_N"/>
    <property type="match status" value="1"/>
</dbReference>
<dbReference type="SUPFAM" id="SSF51419">
    <property type="entry name" value="PLP-binding barrel"/>
    <property type="match status" value="1"/>
</dbReference>
<keyword id="KW-1185">Reference proteome</keyword>
<proteinExistence type="predicted"/>
<name>Y1413_MYCTU</name>
<reference key="1">
    <citation type="journal article" date="1998" name="Nature">
        <title>Deciphering the biology of Mycobacterium tuberculosis from the complete genome sequence.</title>
        <authorList>
            <person name="Cole S.T."/>
            <person name="Brosch R."/>
            <person name="Parkhill J."/>
            <person name="Garnier T."/>
            <person name="Churcher C.M."/>
            <person name="Harris D.E."/>
            <person name="Gordon S.V."/>
            <person name="Eiglmeier K."/>
            <person name="Gas S."/>
            <person name="Barry C.E. III"/>
            <person name="Tekaia F."/>
            <person name="Badcock K."/>
            <person name="Basham D."/>
            <person name="Brown D."/>
            <person name="Chillingworth T."/>
            <person name="Connor R."/>
            <person name="Davies R.M."/>
            <person name="Devlin K."/>
            <person name="Feltwell T."/>
            <person name="Gentles S."/>
            <person name="Hamlin N."/>
            <person name="Holroyd S."/>
            <person name="Hornsby T."/>
            <person name="Jagels K."/>
            <person name="Krogh A."/>
            <person name="McLean J."/>
            <person name="Moule S."/>
            <person name="Murphy L.D."/>
            <person name="Oliver S."/>
            <person name="Osborne J."/>
            <person name="Quail M.A."/>
            <person name="Rajandream M.A."/>
            <person name="Rogers J."/>
            <person name="Rutter S."/>
            <person name="Seeger K."/>
            <person name="Skelton S."/>
            <person name="Squares S."/>
            <person name="Squares R."/>
            <person name="Sulston J.E."/>
            <person name="Taylor K."/>
            <person name="Whitehead S."/>
            <person name="Barrell B.G."/>
        </authorList>
    </citation>
    <scope>NUCLEOTIDE SEQUENCE [LARGE SCALE GENOMIC DNA]</scope>
    <source>
        <strain>ATCC 25618 / H37Rv</strain>
    </source>
</reference>
<feature type="chain" id="PRO_0000103839" description="Uncharacterized protein Rv1413">
    <location>
        <begin position="1"/>
        <end position="171"/>
    </location>
</feature>